<name>GLGB_ORYSJ</name>
<dbReference type="EC" id="2.4.1.18" evidence="1"/>
<dbReference type="EMBL" id="D10752">
    <property type="protein sequence ID" value="BAA01584.1"/>
    <property type="molecule type" value="mRNA"/>
</dbReference>
<dbReference type="EMBL" id="D10838">
    <property type="protein sequence ID" value="BAA01616.1"/>
    <property type="status" value="ALT_SEQ"/>
    <property type="molecule type" value="Genomic_DNA"/>
</dbReference>
<dbReference type="EMBL" id="D11082">
    <property type="protein sequence ID" value="BAA01855.1"/>
    <property type="molecule type" value="mRNA"/>
</dbReference>
<dbReference type="EMBL" id="AY302112">
    <property type="protein sequence ID" value="AAP68993.1"/>
    <property type="molecule type" value="mRNA"/>
</dbReference>
<dbReference type="EMBL" id="AF136268">
    <property type="protein sequence ID" value="AAD28284.1"/>
    <property type="molecule type" value="mRNA"/>
</dbReference>
<dbReference type="EMBL" id="AP003685">
    <property type="protein sequence ID" value="BAD61712.1"/>
    <property type="molecule type" value="Genomic_DNA"/>
</dbReference>
<dbReference type="EMBL" id="AP003685">
    <property type="protein sequence ID" value="BAD61713.1"/>
    <property type="molecule type" value="Genomic_DNA"/>
</dbReference>
<dbReference type="EMBL" id="AP004685">
    <property type="protein sequence ID" value="BAD61804.1"/>
    <property type="molecule type" value="Genomic_DNA"/>
</dbReference>
<dbReference type="EMBL" id="AP004685">
    <property type="protein sequence ID" value="BAD61805.1"/>
    <property type="molecule type" value="Genomic_DNA"/>
</dbReference>
<dbReference type="EMBL" id="AP014962">
    <property type="protein sequence ID" value="BAS99598.1"/>
    <property type="molecule type" value="Genomic_DNA"/>
</dbReference>
<dbReference type="EMBL" id="AK068920">
    <property type="status" value="NOT_ANNOTATED_CDS"/>
    <property type="molecule type" value="mRNA"/>
</dbReference>
<dbReference type="PIR" id="JX0243">
    <property type="entry name" value="JX0243"/>
</dbReference>
<dbReference type="RefSeq" id="XP_015643111.1">
    <property type="nucleotide sequence ID" value="XM_015787625.1"/>
</dbReference>
<dbReference type="RefSeq" id="XP_015643112.1">
    <property type="nucleotide sequence ID" value="XM_015787626.1"/>
</dbReference>
<dbReference type="RefSeq" id="XP_015643113.1">
    <property type="nucleotide sequence ID" value="XM_015787627.1"/>
</dbReference>
<dbReference type="PDB" id="3AMK">
    <property type="method" value="X-ray"/>
    <property type="resolution" value="1.90 A"/>
    <property type="chains" value="A=66-767"/>
</dbReference>
<dbReference type="PDB" id="3AML">
    <property type="method" value="X-ray"/>
    <property type="resolution" value="1.70 A"/>
    <property type="chains" value="A=66-820"/>
</dbReference>
<dbReference type="PDB" id="3VU2">
    <property type="method" value="X-ray"/>
    <property type="resolution" value="2.23 A"/>
    <property type="chains" value="A/B=66-767"/>
</dbReference>
<dbReference type="PDB" id="7ML5">
    <property type="method" value="X-ray"/>
    <property type="resolution" value="2.35 A"/>
    <property type="chains" value="A=67-767"/>
</dbReference>
<dbReference type="PDBsum" id="3AMK"/>
<dbReference type="PDBsum" id="3AML"/>
<dbReference type="PDBsum" id="3VU2"/>
<dbReference type="PDBsum" id="7ML5"/>
<dbReference type="SMR" id="Q01401"/>
<dbReference type="FunCoup" id="Q01401">
    <property type="interactions" value="1827"/>
</dbReference>
<dbReference type="STRING" id="39947.Q01401"/>
<dbReference type="CAZy" id="CBM48">
    <property type="family name" value="Carbohydrate-Binding Module Family 48"/>
</dbReference>
<dbReference type="CAZy" id="GH13">
    <property type="family name" value="Glycoside Hydrolase Family 13"/>
</dbReference>
<dbReference type="PaxDb" id="39947-Q01401"/>
<dbReference type="EnsemblPlants" id="Os06t0726400-01">
    <molecule id="Q01401-1"/>
    <property type="protein sequence ID" value="Os06t0726400-01"/>
    <property type="gene ID" value="Os06g0726400"/>
</dbReference>
<dbReference type="Gramene" id="Os06t0726400-01">
    <molecule id="Q01401-1"/>
    <property type="protein sequence ID" value="Os06t0726400-01"/>
    <property type="gene ID" value="Os06g0726400"/>
</dbReference>
<dbReference type="eggNOG" id="KOG0470">
    <property type="taxonomic scope" value="Eukaryota"/>
</dbReference>
<dbReference type="InParanoid" id="Q01401"/>
<dbReference type="OMA" id="YEMHLGS"/>
<dbReference type="OrthoDB" id="196493at2759"/>
<dbReference type="BRENDA" id="2.4.1.18">
    <property type="organism ID" value="4460"/>
</dbReference>
<dbReference type="PlantReactome" id="R-OSA-9626305">
    <property type="pathway name" value="Regulatory network of nutrient accumulation"/>
</dbReference>
<dbReference type="UniPathway" id="UPA00152"/>
<dbReference type="EvolutionaryTrace" id="Q01401"/>
<dbReference type="Proteomes" id="UP000000763">
    <property type="component" value="Chromosome 6"/>
</dbReference>
<dbReference type="Proteomes" id="UP000059680">
    <property type="component" value="Chromosome 6"/>
</dbReference>
<dbReference type="ExpressionAtlas" id="Q01401">
    <property type="expression patterns" value="baseline and differential"/>
</dbReference>
<dbReference type="GO" id="GO:0009501">
    <property type="term" value="C:amyloplast"/>
    <property type="evidence" value="ECO:0000250"/>
    <property type="project" value="Gramene"/>
</dbReference>
<dbReference type="GO" id="GO:0009507">
    <property type="term" value="C:chloroplast"/>
    <property type="evidence" value="ECO:0007669"/>
    <property type="project" value="UniProtKB-SubCell"/>
</dbReference>
<dbReference type="GO" id="GO:0005737">
    <property type="term" value="C:cytoplasm"/>
    <property type="evidence" value="ECO:0000318"/>
    <property type="project" value="GO_Central"/>
</dbReference>
<dbReference type="GO" id="GO:0003844">
    <property type="term" value="F:1,4-alpha-glucan branching enzyme activity"/>
    <property type="evidence" value="ECO:0000250"/>
    <property type="project" value="Gramene"/>
</dbReference>
<dbReference type="GO" id="GO:0043169">
    <property type="term" value="F:cation binding"/>
    <property type="evidence" value="ECO:0007669"/>
    <property type="project" value="InterPro"/>
</dbReference>
<dbReference type="GO" id="GO:0004553">
    <property type="term" value="F:hydrolase activity, hydrolyzing O-glycosyl compounds"/>
    <property type="evidence" value="ECO:0007669"/>
    <property type="project" value="InterPro"/>
</dbReference>
<dbReference type="GO" id="GO:0005975">
    <property type="term" value="P:carbohydrate metabolic process"/>
    <property type="evidence" value="ECO:0000318"/>
    <property type="project" value="GO_Central"/>
</dbReference>
<dbReference type="GO" id="GO:0005978">
    <property type="term" value="P:glycogen biosynthetic process"/>
    <property type="evidence" value="ECO:0007669"/>
    <property type="project" value="InterPro"/>
</dbReference>
<dbReference type="GO" id="GO:0019252">
    <property type="term" value="P:starch biosynthetic process"/>
    <property type="evidence" value="ECO:0007669"/>
    <property type="project" value="UniProtKB-UniPathway"/>
</dbReference>
<dbReference type="GO" id="GO:0005983">
    <property type="term" value="P:starch catabolic process"/>
    <property type="evidence" value="ECO:0007669"/>
    <property type="project" value="UniProtKB-ARBA"/>
</dbReference>
<dbReference type="GO" id="GO:0005982">
    <property type="term" value="P:starch metabolic process"/>
    <property type="evidence" value="ECO:0000250"/>
    <property type="project" value="Gramene"/>
</dbReference>
<dbReference type="CDD" id="cd11321">
    <property type="entry name" value="AmyAc_bac_euk_BE"/>
    <property type="match status" value="1"/>
</dbReference>
<dbReference type="CDD" id="cd02854">
    <property type="entry name" value="E_set_GBE_euk_N"/>
    <property type="match status" value="1"/>
</dbReference>
<dbReference type="FunFam" id="3.20.20.80:FF:000001">
    <property type="entry name" value="1,4-alpha-glucan branching enzyme"/>
    <property type="match status" value="1"/>
</dbReference>
<dbReference type="FunFam" id="2.60.40.10:FF:000250">
    <property type="entry name" value="1,4-alpha-glucan-branching enzyme, chloroplastic/amyloplastic"/>
    <property type="match status" value="1"/>
</dbReference>
<dbReference type="FunFam" id="2.60.40.1180:FF:000003">
    <property type="entry name" value="1,4-alpha-glucan-branching enzyme, chloroplastic/amyloplastic"/>
    <property type="match status" value="1"/>
</dbReference>
<dbReference type="Gene3D" id="3.20.20.80">
    <property type="entry name" value="Glycosidases"/>
    <property type="match status" value="1"/>
</dbReference>
<dbReference type="Gene3D" id="2.60.40.1180">
    <property type="entry name" value="Golgi alpha-mannosidase II"/>
    <property type="match status" value="1"/>
</dbReference>
<dbReference type="Gene3D" id="2.60.40.10">
    <property type="entry name" value="Immunoglobulins"/>
    <property type="match status" value="1"/>
</dbReference>
<dbReference type="InterPro" id="IPR006048">
    <property type="entry name" value="A-amylase/branching_C"/>
</dbReference>
<dbReference type="InterPro" id="IPR037439">
    <property type="entry name" value="Branching_enzy"/>
</dbReference>
<dbReference type="InterPro" id="IPR006047">
    <property type="entry name" value="Glyco_hydro_13_cat_dom"/>
</dbReference>
<dbReference type="InterPro" id="IPR004193">
    <property type="entry name" value="Glyco_hydro_13_N"/>
</dbReference>
<dbReference type="InterPro" id="IPR013780">
    <property type="entry name" value="Glyco_hydro_b"/>
</dbReference>
<dbReference type="InterPro" id="IPR017853">
    <property type="entry name" value="Glycoside_hydrolase_SF"/>
</dbReference>
<dbReference type="InterPro" id="IPR013783">
    <property type="entry name" value="Ig-like_fold"/>
</dbReference>
<dbReference type="InterPro" id="IPR014756">
    <property type="entry name" value="Ig_E-set"/>
</dbReference>
<dbReference type="PANTHER" id="PTHR43651">
    <property type="entry name" value="1,4-ALPHA-GLUCAN-BRANCHING ENZYME"/>
    <property type="match status" value="1"/>
</dbReference>
<dbReference type="PANTHER" id="PTHR43651:SF2">
    <property type="entry name" value="1,4-ALPHA-GLUCAN-BRANCHING ENZYME, CHLOROPLASTIC_AMYLOPLASTIC"/>
    <property type="match status" value="1"/>
</dbReference>
<dbReference type="Pfam" id="PF00128">
    <property type="entry name" value="Alpha-amylase"/>
    <property type="match status" value="1"/>
</dbReference>
<dbReference type="Pfam" id="PF02806">
    <property type="entry name" value="Alpha-amylase_C"/>
    <property type="match status" value="1"/>
</dbReference>
<dbReference type="Pfam" id="PF02922">
    <property type="entry name" value="CBM_48"/>
    <property type="match status" value="1"/>
</dbReference>
<dbReference type="PIRSF" id="PIRSF000463">
    <property type="entry name" value="GlgB"/>
    <property type="match status" value="1"/>
</dbReference>
<dbReference type="SMART" id="SM00642">
    <property type="entry name" value="Aamy"/>
    <property type="match status" value="1"/>
</dbReference>
<dbReference type="SUPFAM" id="SSF51445">
    <property type="entry name" value="(Trans)glycosidases"/>
    <property type="match status" value="1"/>
</dbReference>
<dbReference type="SUPFAM" id="SSF81296">
    <property type="entry name" value="E set domains"/>
    <property type="match status" value="1"/>
</dbReference>
<dbReference type="SUPFAM" id="SSF51011">
    <property type="entry name" value="Glycosyl hydrolase domain"/>
    <property type="match status" value="1"/>
</dbReference>
<keyword id="KW-0002">3D-structure</keyword>
<keyword id="KW-0025">Alternative splicing</keyword>
<keyword id="KW-0035">Amyloplast</keyword>
<keyword id="KW-0150">Chloroplast</keyword>
<keyword id="KW-0903">Direct protein sequencing</keyword>
<keyword id="KW-0328">Glycosyltransferase</keyword>
<keyword id="KW-0934">Plastid</keyword>
<keyword id="KW-1185">Reference proteome</keyword>
<keyword id="KW-0750">Starch biosynthesis</keyword>
<keyword id="KW-0808">Transferase</keyword>
<keyword id="KW-0809">Transit peptide</keyword>
<reference key="1">
    <citation type="journal article" date="1992" name="Plant Physiol.">
        <title>Nucleotide sequence of a cDNA encoding starch-branching enzyme, or Q-enzyme I, from rice endosperm.</title>
        <authorList>
            <person name="Nakamura Y."/>
            <person name="Yamanouchi H."/>
        </authorList>
    </citation>
    <scope>NUCLEOTIDE SEQUENCE [MRNA] (ISOFORM 1)</scope>
    <source>
        <tissue>Endosperm</tissue>
    </source>
</reference>
<reference key="2">
    <citation type="journal article" date="1993" name="Mol. Gen. Genet.">
        <title>Molecular analysis of the gene encoding a rice starch branching enzyme.</title>
        <authorList>
            <person name="Kawasaki T."/>
            <person name="Mizuno K."/>
            <person name="Baba T."/>
            <person name="Shimada H."/>
        </authorList>
    </citation>
    <scope>NUCLEOTIDE SEQUENCE [GENOMIC DNA]</scope>
</reference>
<reference key="3">
    <citation type="journal article" date="1992" name="J. Biochem.">
        <title>Starch branching enzymes from immature rice seeds.</title>
        <authorList>
            <person name="Mizuno K."/>
            <person name="Kimura K."/>
            <person name="Arai Y."/>
            <person name="Kawasaki T."/>
            <person name="Shimada H."/>
            <person name="Baba T."/>
        </authorList>
    </citation>
    <scope>NUCLEOTIDE SEQUENCE [MRNA] (ISOFORM 1)</scope>
    <scope>PROTEIN SEQUENCE OF 65-81</scope>
</reference>
<reference key="4">
    <citation type="journal article" date="2003" name="Zhongguo Shuidao Kexue">
        <title>cDNA cloning and sequence analysis of rice Sbe1 and Sbe3 genes.</title>
        <authorList>
            <person name="Chen X.H."/>
            <person name="Liu Q.Q."/>
            <person name="Wu H.K."/>
            <person name="Wang Z.Y."/>
            <person name="Gu M.H."/>
        </authorList>
    </citation>
    <scope>NUCLEOTIDE SEQUENCE [MRNA] (ISOFORM 1)</scope>
    <source>
        <strain>cv. Wuyunjing 7</strain>
        <tissue>Seed</tissue>
    </source>
</reference>
<reference key="5">
    <citation type="submission" date="1999-03" db="EMBL/GenBank/DDBJ databases">
        <authorList>
            <person name="Junwang X."/>
            <person name="Zhen Z."/>
        </authorList>
    </citation>
    <scope>NUCLEOTIDE SEQUENCE [MRNA] (ISOFORM 1)</scope>
    <source>
        <strain>cv. Nanjing 37</strain>
    </source>
</reference>
<reference key="6">
    <citation type="journal article" date="2005" name="Nature">
        <title>The map-based sequence of the rice genome.</title>
        <authorList>
            <consortium name="International rice genome sequencing project (IRGSP)"/>
        </authorList>
    </citation>
    <scope>NUCLEOTIDE SEQUENCE [LARGE SCALE GENOMIC DNA]</scope>
    <source>
        <strain>cv. Nipponbare</strain>
    </source>
</reference>
<reference key="7">
    <citation type="journal article" date="2013" name="Rice">
        <title>Improvement of the Oryza sativa Nipponbare reference genome using next generation sequence and optical map data.</title>
        <authorList>
            <person name="Kawahara Y."/>
            <person name="de la Bastide M."/>
            <person name="Hamilton J.P."/>
            <person name="Kanamori H."/>
            <person name="McCombie W.R."/>
            <person name="Ouyang S."/>
            <person name="Schwartz D.C."/>
            <person name="Tanaka T."/>
            <person name="Wu J."/>
            <person name="Zhou S."/>
            <person name="Childs K.L."/>
            <person name="Davidson R.M."/>
            <person name="Lin H."/>
            <person name="Quesada-Ocampo L."/>
            <person name="Vaillancourt B."/>
            <person name="Sakai H."/>
            <person name="Lee S.S."/>
            <person name="Kim J."/>
            <person name="Numa H."/>
            <person name="Itoh T."/>
            <person name="Buell C.R."/>
            <person name="Matsumoto T."/>
        </authorList>
    </citation>
    <scope>GENOME REANNOTATION</scope>
    <source>
        <strain>cv. Nipponbare</strain>
    </source>
</reference>
<reference key="8">
    <citation type="journal article" date="2003" name="Science">
        <title>Collection, mapping, and annotation of over 28,000 cDNA clones from japonica rice.</title>
        <authorList>
            <consortium name="The rice full-length cDNA consortium"/>
        </authorList>
    </citation>
    <scope>NUCLEOTIDE SEQUENCE [LARGE SCALE MRNA] (ISOFORM 2)</scope>
    <source>
        <strain>cv. Nipponbare</strain>
    </source>
</reference>
<accession>Q01401</accession>
<accession>Q40664</accession>
<accession>Q5Z7Q1</accession>
<accession>Q7XZP9</accession>
<evidence type="ECO:0000250" key="1">
    <source>
        <dbReference type="UniProtKB" id="Q04446"/>
    </source>
</evidence>
<evidence type="ECO:0000250" key="2">
    <source>
        <dbReference type="UniProtKB" id="Q6FJV0"/>
    </source>
</evidence>
<evidence type="ECO:0000256" key="3">
    <source>
        <dbReference type="SAM" id="MobiDB-lite"/>
    </source>
</evidence>
<evidence type="ECO:0000269" key="4">
    <source>
    </source>
</evidence>
<evidence type="ECO:0000303" key="5">
    <source>
    </source>
</evidence>
<evidence type="ECO:0000305" key="6"/>
<evidence type="ECO:0007829" key="7">
    <source>
        <dbReference type="PDB" id="3AMK"/>
    </source>
</evidence>
<evidence type="ECO:0007829" key="8">
    <source>
        <dbReference type="PDB" id="3AML"/>
    </source>
</evidence>
<evidence type="ECO:0007829" key="9">
    <source>
        <dbReference type="PDB" id="3VU2"/>
    </source>
</evidence>
<evidence type="ECO:0007829" key="10">
    <source>
        <dbReference type="PDB" id="7ML5"/>
    </source>
</evidence>
<gene>
    <name type="primary">SBE1</name>
    <name type="synonym">RBE1</name>
    <name type="ordered locus">Os06g0726400</name>
    <name type="ordered locus">LOC_Os06g51084</name>
    <name type="ORF">P0017G10.8-1</name>
    <name type="ORF">P0017G10.8-2</name>
    <name type="ORF">P0548E04.28-1</name>
    <name type="ORF">P0548E04.28-2</name>
</gene>
<feature type="transit peptide" description="Chloroplast" evidence="4">
    <location>
        <begin position="1"/>
        <end position="64"/>
    </location>
</feature>
<feature type="chain" id="PRO_0000011148" description="1,4-alpha-glucan-branching enzyme, chloroplastic/amyloplastic">
    <location>
        <begin position="65"/>
        <end position="820"/>
    </location>
</feature>
<feature type="region of interest" description="Disordered" evidence="3">
    <location>
        <begin position="1"/>
        <end position="28"/>
    </location>
</feature>
<feature type="compositionally biased region" description="Low complexity" evidence="3">
    <location>
        <begin position="1"/>
        <end position="20"/>
    </location>
</feature>
<feature type="active site" description="Nucleophile" evidence="1">
    <location>
        <position position="409"/>
    </location>
</feature>
<feature type="active site" description="Proton donor" evidence="1">
    <location>
        <position position="464"/>
    </location>
</feature>
<feature type="binding site" evidence="2">
    <location>
        <position position="153"/>
    </location>
    <ligand>
        <name>(1,4-alpha-D-glucosyl)n</name>
        <dbReference type="ChEBI" id="CHEBI:15444"/>
    </ligand>
</feature>
<feature type="binding site" evidence="2">
    <location>
        <position position="188"/>
    </location>
    <ligand>
        <name>(1,4-alpha-D-glucosyl)n</name>
        <dbReference type="ChEBI" id="CHEBI:15444"/>
    </ligand>
</feature>
<feature type="site" description="Transition state stabilizer" evidence="1">
    <location>
        <position position="533"/>
    </location>
</feature>
<feature type="splice variant" id="VSP_017510" description="In isoform 2." evidence="5">
    <location>
        <begin position="1"/>
        <end position="65"/>
    </location>
</feature>
<feature type="sequence conflict" description="In Ref. 1; BAA01584." evidence="6" ref="1">
    <original>A</original>
    <variation>P</variation>
    <location>
        <position position="13"/>
    </location>
</feature>
<feature type="sequence conflict" description="In Ref. 8; AK068920." evidence="6" ref="8">
    <original>D</original>
    <variation>G</variation>
    <location>
        <position position="533"/>
    </location>
</feature>
<feature type="sequence conflict" description="In Ref. 4; AAP68993." evidence="6" ref="4">
    <original>N</original>
    <variation>S</variation>
    <location>
        <position position="738"/>
    </location>
</feature>
<feature type="sequence conflict" description="In Ref. 4; AAP68993." evidence="6" ref="4">
    <original>E</original>
    <variation>G</variation>
    <location>
        <position position="789"/>
    </location>
</feature>
<feature type="helix" evidence="7">
    <location>
        <begin position="72"/>
        <end position="74"/>
    </location>
</feature>
<feature type="helix" evidence="8">
    <location>
        <begin position="78"/>
        <end position="81"/>
    </location>
</feature>
<feature type="helix" evidence="8">
    <location>
        <begin position="83"/>
        <end position="88"/>
    </location>
</feature>
<feature type="helix" evidence="8">
    <location>
        <begin position="89"/>
        <end position="110"/>
    </location>
</feature>
<feature type="helix" evidence="8">
    <location>
        <begin position="113"/>
        <end position="116"/>
    </location>
</feature>
<feature type="helix" evidence="8">
    <location>
        <begin position="117"/>
        <end position="121"/>
    </location>
</feature>
<feature type="strand" evidence="8">
    <location>
        <begin position="123"/>
        <end position="128"/>
    </location>
</feature>
<feature type="strand" evidence="8">
    <location>
        <begin position="131"/>
        <end position="137"/>
    </location>
</feature>
<feature type="strand" evidence="8">
    <location>
        <begin position="142"/>
        <end position="148"/>
    </location>
</feature>
<feature type="helix" evidence="8">
    <location>
        <begin position="149"/>
        <end position="151"/>
    </location>
</feature>
<feature type="helix" evidence="10">
    <location>
        <begin position="155"/>
        <end position="157"/>
    </location>
</feature>
<feature type="strand" evidence="8">
    <location>
        <begin position="166"/>
        <end position="173"/>
    </location>
</feature>
<feature type="strand" evidence="8">
    <location>
        <begin position="185"/>
        <end position="192"/>
    </location>
</feature>
<feature type="strand" evidence="8">
    <location>
        <begin position="199"/>
        <end position="201"/>
    </location>
</feature>
<feature type="strand" evidence="8">
    <location>
        <begin position="209"/>
        <end position="211"/>
    </location>
</feature>
<feature type="strand" evidence="8">
    <location>
        <begin position="214"/>
        <end position="217"/>
    </location>
</feature>
<feature type="strand" evidence="8">
    <location>
        <begin position="220"/>
        <end position="224"/>
    </location>
</feature>
<feature type="helix" evidence="8">
    <location>
        <begin position="229"/>
        <end position="231"/>
    </location>
</feature>
<feature type="strand" evidence="8">
    <location>
        <begin position="247"/>
        <end position="253"/>
    </location>
</feature>
<feature type="strand" evidence="8">
    <location>
        <begin position="257"/>
        <end position="261"/>
    </location>
</feature>
<feature type="helix" evidence="8">
    <location>
        <begin position="265"/>
        <end position="271"/>
    </location>
</feature>
<feature type="helix" evidence="8">
    <location>
        <begin position="273"/>
        <end position="278"/>
    </location>
</feature>
<feature type="strand" evidence="8">
    <location>
        <begin position="283"/>
        <end position="288"/>
    </location>
</feature>
<feature type="helix" evidence="8">
    <location>
        <begin position="295"/>
        <end position="297"/>
    </location>
</feature>
<feature type="strand" evidence="8">
    <location>
        <begin position="303"/>
        <end position="308"/>
    </location>
</feature>
<feature type="helix" evidence="8">
    <location>
        <begin position="310"/>
        <end position="312"/>
    </location>
</feature>
<feature type="helix" evidence="8">
    <location>
        <begin position="315"/>
        <end position="327"/>
    </location>
</feature>
<feature type="strand" evidence="8">
    <location>
        <begin position="331"/>
        <end position="336"/>
    </location>
</feature>
<feature type="turn" evidence="8">
    <location>
        <begin position="345"/>
        <end position="347"/>
    </location>
</feature>
<feature type="helix" evidence="8">
    <location>
        <begin position="349"/>
        <end position="352"/>
    </location>
</feature>
<feature type="helix" evidence="8">
    <location>
        <begin position="358"/>
        <end position="360"/>
    </location>
</feature>
<feature type="strand" evidence="8">
    <location>
        <begin position="361"/>
        <end position="363"/>
    </location>
</feature>
<feature type="helix" evidence="8">
    <location>
        <begin position="366"/>
        <end position="369"/>
    </location>
</feature>
<feature type="turn" evidence="8">
    <location>
        <begin position="372"/>
        <end position="375"/>
    </location>
</feature>
<feature type="helix" evidence="8">
    <location>
        <begin position="384"/>
        <end position="401"/>
    </location>
</feature>
<feature type="strand" evidence="8">
    <location>
        <begin position="405"/>
        <end position="408"/>
    </location>
</feature>
<feature type="helix" evidence="8">
    <location>
        <begin position="411"/>
        <end position="415"/>
    </location>
</feature>
<feature type="turn" evidence="8">
    <location>
        <begin position="417"/>
        <end position="422"/>
    </location>
</feature>
<feature type="helix" evidence="8">
    <location>
        <begin position="429"/>
        <end position="431"/>
    </location>
</feature>
<feature type="helix" evidence="8">
    <location>
        <begin position="439"/>
        <end position="455"/>
    </location>
</feature>
<feature type="strand" evidence="8">
    <location>
        <begin position="460"/>
        <end position="463"/>
    </location>
</feature>
<feature type="turn" evidence="8">
    <location>
        <begin position="470"/>
        <end position="473"/>
    </location>
</feature>
<feature type="helix" evidence="8">
    <location>
        <begin position="476"/>
        <end position="478"/>
    </location>
</feature>
<feature type="strand" evidence="8">
    <location>
        <begin position="484"/>
        <end position="487"/>
    </location>
</feature>
<feature type="helix" evidence="8">
    <location>
        <begin position="491"/>
        <end position="501"/>
    </location>
</feature>
<feature type="helix" evidence="8">
    <location>
        <begin position="504"/>
        <end position="506"/>
    </location>
</feature>
<feature type="helix" evidence="8">
    <location>
        <begin position="509"/>
        <end position="517"/>
    </location>
</feature>
<feature type="strand" evidence="8">
    <location>
        <begin position="525"/>
        <end position="527"/>
    </location>
</feature>
<feature type="helix" evidence="9">
    <location>
        <begin position="532"/>
        <end position="536"/>
    </location>
</feature>
<feature type="helix" evidence="8">
    <location>
        <begin position="542"/>
        <end position="547"/>
    </location>
</feature>
<feature type="helix" evidence="8">
    <location>
        <begin position="550"/>
        <end position="553"/>
    </location>
</feature>
<feature type="strand" evidence="8">
    <location>
        <begin position="556"/>
        <end position="559"/>
    </location>
</feature>
<feature type="helix" evidence="8">
    <location>
        <begin position="563"/>
        <end position="583"/>
    </location>
</feature>
<feature type="strand" evidence="8">
    <location>
        <begin position="585"/>
        <end position="590"/>
    </location>
</feature>
<feature type="helix" evidence="8">
    <location>
        <begin position="593"/>
        <end position="595"/>
    </location>
</feature>
<feature type="helix" evidence="8">
    <location>
        <begin position="606"/>
        <end position="608"/>
    </location>
</feature>
<feature type="helix" evidence="8">
    <location>
        <begin position="619"/>
        <end position="623"/>
    </location>
</feature>
<feature type="helix" evidence="8">
    <location>
        <begin position="629"/>
        <end position="646"/>
    </location>
</feature>
<feature type="helix" evidence="8">
    <location>
        <begin position="648"/>
        <end position="650"/>
    </location>
</feature>
<feature type="strand" evidence="8">
    <location>
        <begin position="654"/>
        <end position="660"/>
    </location>
</feature>
<feature type="turn" evidence="8">
    <location>
        <begin position="661"/>
        <end position="664"/>
    </location>
</feature>
<feature type="strand" evidence="8">
    <location>
        <begin position="665"/>
        <end position="670"/>
    </location>
</feature>
<feature type="strand" evidence="8">
    <location>
        <begin position="673"/>
        <end position="678"/>
    </location>
</feature>
<feature type="strand" evidence="8">
    <location>
        <begin position="685"/>
        <end position="694"/>
    </location>
</feature>
<feature type="strand" evidence="8">
    <location>
        <begin position="696"/>
        <end position="703"/>
    </location>
</feature>
<feature type="helix" evidence="8">
    <location>
        <begin position="707"/>
        <end position="709"/>
    </location>
</feature>
<feature type="strand" evidence="10">
    <location>
        <begin position="724"/>
        <end position="726"/>
    </location>
</feature>
<feature type="helix" evidence="8">
    <location>
        <begin position="732"/>
        <end position="734"/>
    </location>
</feature>
<feature type="strand" evidence="8">
    <location>
        <begin position="739"/>
        <end position="747"/>
    </location>
</feature>
<feature type="strand" evidence="8">
    <location>
        <begin position="751"/>
        <end position="757"/>
    </location>
</feature>
<feature type="turn" evidence="8">
    <location>
        <begin position="760"/>
        <end position="762"/>
    </location>
</feature>
<protein>
    <recommendedName>
        <fullName>1,4-alpha-glucan-branching enzyme, chloroplastic/amyloplastic</fullName>
        <ecNumber evidence="1">2.4.1.18</ecNumber>
    </recommendedName>
    <alternativeName>
        <fullName>Q-enzyme</fullName>
    </alternativeName>
    <alternativeName>
        <fullName>Starch-branching enzyme</fullName>
    </alternativeName>
</protein>
<organism>
    <name type="scientific">Oryza sativa subsp. japonica</name>
    <name type="common">Rice</name>
    <dbReference type="NCBI Taxonomy" id="39947"/>
    <lineage>
        <taxon>Eukaryota</taxon>
        <taxon>Viridiplantae</taxon>
        <taxon>Streptophyta</taxon>
        <taxon>Embryophyta</taxon>
        <taxon>Tracheophyta</taxon>
        <taxon>Spermatophyta</taxon>
        <taxon>Magnoliopsida</taxon>
        <taxon>Liliopsida</taxon>
        <taxon>Poales</taxon>
        <taxon>Poaceae</taxon>
        <taxon>BOP clade</taxon>
        <taxon>Oryzoideae</taxon>
        <taxon>Oryzeae</taxon>
        <taxon>Oryzinae</taxon>
        <taxon>Oryza</taxon>
        <taxon>Oryza sativa</taxon>
    </lineage>
</organism>
<comment type="function">
    <text>Catalyzes the formation of the alpha-1,6-glucosidic linkages in starch by scission of a 1,4-alpha-linked oligosaccharide from growing alpha-1,4-glucan chains and the subsequent attachment of the oligosaccharide to the alpha-1,6 position.</text>
</comment>
<comment type="catalytic activity">
    <reaction evidence="1">
        <text>Transfers a segment of a (1-&gt;4)-alpha-D-glucan chain to a primary hydroxy group in a similar glucan chain.</text>
        <dbReference type="EC" id="2.4.1.18"/>
    </reaction>
</comment>
<comment type="pathway">
    <text>Glycan biosynthesis; starch biosynthesis.</text>
</comment>
<comment type="subunit">
    <text>Monomer.</text>
</comment>
<comment type="subcellular location">
    <subcellularLocation>
        <location>Plastid</location>
        <location>Chloroplast</location>
    </subcellularLocation>
    <subcellularLocation>
        <location>Plastid</location>
        <location>Amyloplast</location>
    </subcellularLocation>
</comment>
<comment type="alternative products">
    <event type="alternative splicing"/>
    <isoform>
        <id>Q01401-1</id>
        <name>1</name>
        <sequence type="displayed"/>
    </isoform>
    <isoform>
        <id>Q01401-2</id>
        <name>2</name>
        <sequence type="described" ref="VSP_017510"/>
    </isoform>
</comment>
<comment type="miscellaneous">
    <text>Isoform 2 lacks the putative transit peptide and may be a cytosolic isoform.</text>
</comment>
<comment type="similarity">
    <text evidence="6">Belongs to the glycosyl hydrolase 13 family. GlgB subfamily.</text>
</comment>
<comment type="sequence caution" evidence="6">
    <conflict type="erroneous gene model prediction">
        <sequence resource="EMBL-CDS" id="BAA01616"/>
    </conflict>
</comment>
<proteinExistence type="evidence at protein level"/>
<sequence>MLCLTSSSSSAPAPLLPSLADRPSPGIAGGGGNVRLSVVSSPRRSWPGKVKTNFSVPATARKNKTMVTVVEEVDHLPIYDLDPKLEEFKDHFNYRIKRYLDQKCLIEKHEGGLEEFSKGYLKFGINTVDGATIYREWAPAAQEAQLIGEFNNWNGAKHKMEKDKFGIWSIKISHVNGKPAIPHNSKVKFRFRHGGGAWVDRIPAWIRYATFDASKFGAPYDGVHWDPPACERYVFKHPRPPKPDAPRIYEAHVGMSGEEPEVSTYREFADNVLPRIRANNYNTVQLMAIMEHSYYASFGYHVTNFFAVSSRSGTPEDLKYLVDKAHSLGLRVLMDVVHSHASNNVTDGLNGYDVGQNTHESYFHTGDRGYHKLWDSRLFNYANWEVLRFLLSNLRYWMDEFMFDGFRFDGVTSMLYHHHGINKGFTGNYKEYFSLDTDVDAIVYMMLANHLMHKLLPEATIVAEDVSGMPVLCRPVDEGGVGFDFRLAMAIPDRWIDYLKNKEDRKWSMSEIVQTLTNRRYTEKCIAYAESHDQSIVGDKTIAFLLMDKEMYTGMSDLQPASPTINRGIALQKMIHFITMALGGDGYLNFMGNEFGHPEWIDFPREGNNWSYDKCRRQWSLVDTDHLRYKYMNAFDQAMNALEEEFSFLSSSKQIVSDMNEKDKVIVFERGDLVFVFNFHPNKTYKGYKVGCDLPGKYRVALDSDALVFGGHGRVGHDVDHFTSPEGMPGVPETNFNNRPNSFKVLSPPRTCVAYYRVDEDREELRRGGAVASGKIVTEYIDVEATSGETISGGWKGSEKDDCGKKGMKFVFRSSDEDCK</sequence>